<accession>Q2RIV6</accession>
<gene>
    <name evidence="1" type="primary">gpsA</name>
    <name type="ordered locus">Moth_1320</name>
</gene>
<protein>
    <recommendedName>
        <fullName evidence="1">Glycerol-3-phosphate dehydrogenase [NAD(P)+]</fullName>
        <ecNumber evidence="1">1.1.1.94</ecNumber>
    </recommendedName>
    <alternativeName>
        <fullName evidence="1">NAD(P)(+)-dependent glycerol-3-phosphate dehydrogenase</fullName>
    </alternativeName>
    <alternativeName>
        <fullName evidence="1">NAD(P)H-dependent dihydroxyacetone-phosphate reductase</fullName>
    </alternativeName>
</protein>
<comment type="function">
    <text evidence="1">Catalyzes the reduction of the glycolytic intermediate dihydroxyacetone phosphate (DHAP) to sn-glycerol 3-phosphate (G3P), the key precursor for phospholipid synthesis.</text>
</comment>
<comment type="catalytic activity">
    <reaction evidence="1">
        <text>sn-glycerol 3-phosphate + NAD(+) = dihydroxyacetone phosphate + NADH + H(+)</text>
        <dbReference type="Rhea" id="RHEA:11092"/>
        <dbReference type="ChEBI" id="CHEBI:15378"/>
        <dbReference type="ChEBI" id="CHEBI:57540"/>
        <dbReference type="ChEBI" id="CHEBI:57597"/>
        <dbReference type="ChEBI" id="CHEBI:57642"/>
        <dbReference type="ChEBI" id="CHEBI:57945"/>
        <dbReference type="EC" id="1.1.1.94"/>
    </reaction>
    <physiologicalReaction direction="right-to-left" evidence="1">
        <dbReference type="Rhea" id="RHEA:11094"/>
    </physiologicalReaction>
</comment>
<comment type="catalytic activity">
    <reaction evidence="1">
        <text>sn-glycerol 3-phosphate + NADP(+) = dihydroxyacetone phosphate + NADPH + H(+)</text>
        <dbReference type="Rhea" id="RHEA:11096"/>
        <dbReference type="ChEBI" id="CHEBI:15378"/>
        <dbReference type="ChEBI" id="CHEBI:57597"/>
        <dbReference type="ChEBI" id="CHEBI:57642"/>
        <dbReference type="ChEBI" id="CHEBI:57783"/>
        <dbReference type="ChEBI" id="CHEBI:58349"/>
        <dbReference type="EC" id="1.1.1.94"/>
    </reaction>
    <physiologicalReaction direction="right-to-left" evidence="1">
        <dbReference type="Rhea" id="RHEA:11098"/>
    </physiologicalReaction>
</comment>
<comment type="pathway">
    <text evidence="1">Membrane lipid metabolism; glycerophospholipid metabolism.</text>
</comment>
<comment type="subcellular location">
    <subcellularLocation>
        <location evidence="1">Cytoplasm</location>
    </subcellularLocation>
</comment>
<comment type="similarity">
    <text evidence="1">Belongs to the NAD-dependent glycerol-3-phosphate dehydrogenase family.</text>
</comment>
<name>GPDA_MOOTA</name>
<keyword id="KW-0963">Cytoplasm</keyword>
<keyword id="KW-0444">Lipid biosynthesis</keyword>
<keyword id="KW-0443">Lipid metabolism</keyword>
<keyword id="KW-0520">NAD</keyword>
<keyword id="KW-0521">NADP</keyword>
<keyword id="KW-0547">Nucleotide-binding</keyword>
<keyword id="KW-0560">Oxidoreductase</keyword>
<keyword id="KW-0594">Phospholipid biosynthesis</keyword>
<keyword id="KW-1208">Phospholipid metabolism</keyword>
<proteinExistence type="inferred from homology"/>
<reference key="1">
    <citation type="journal article" date="2008" name="Environ. Microbiol.">
        <title>The complete genome sequence of Moorella thermoacetica (f. Clostridium thermoaceticum).</title>
        <authorList>
            <person name="Pierce E."/>
            <person name="Xie G."/>
            <person name="Barabote R.D."/>
            <person name="Saunders E."/>
            <person name="Han C.S."/>
            <person name="Detter J.C."/>
            <person name="Richardson P."/>
            <person name="Brettin T.S."/>
            <person name="Das A."/>
            <person name="Ljungdahl L.G."/>
            <person name="Ragsdale S.W."/>
        </authorList>
    </citation>
    <scope>NUCLEOTIDE SEQUENCE [LARGE SCALE GENOMIC DNA]</scope>
    <source>
        <strain>ATCC 39073 / JCM 9320</strain>
    </source>
</reference>
<organism>
    <name type="scientific">Moorella thermoacetica (strain ATCC 39073 / JCM 9320)</name>
    <dbReference type="NCBI Taxonomy" id="264732"/>
    <lineage>
        <taxon>Bacteria</taxon>
        <taxon>Bacillati</taxon>
        <taxon>Bacillota</taxon>
        <taxon>Clostridia</taxon>
        <taxon>Moorellales</taxon>
        <taxon>Moorellaceae</taxon>
        <taxon>Moorella</taxon>
    </lineage>
</organism>
<dbReference type="EC" id="1.1.1.94" evidence="1"/>
<dbReference type="EMBL" id="CP000232">
    <property type="protein sequence ID" value="ABC19633.1"/>
    <property type="molecule type" value="Genomic_DNA"/>
</dbReference>
<dbReference type="RefSeq" id="YP_430176.1">
    <property type="nucleotide sequence ID" value="NC_007644.1"/>
</dbReference>
<dbReference type="SMR" id="Q2RIV6"/>
<dbReference type="STRING" id="264732.Moth_1320"/>
<dbReference type="EnsemblBacteria" id="ABC19633">
    <property type="protein sequence ID" value="ABC19633"/>
    <property type="gene ID" value="Moth_1320"/>
</dbReference>
<dbReference type="KEGG" id="mta:Moth_1320"/>
<dbReference type="PATRIC" id="fig|264732.11.peg.1418"/>
<dbReference type="eggNOG" id="COG0240">
    <property type="taxonomic scope" value="Bacteria"/>
</dbReference>
<dbReference type="HOGENOM" id="CLU_033449_0_2_9"/>
<dbReference type="OrthoDB" id="9812273at2"/>
<dbReference type="UniPathway" id="UPA00940"/>
<dbReference type="GO" id="GO:0005829">
    <property type="term" value="C:cytosol"/>
    <property type="evidence" value="ECO:0007669"/>
    <property type="project" value="TreeGrafter"/>
</dbReference>
<dbReference type="GO" id="GO:0047952">
    <property type="term" value="F:glycerol-3-phosphate dehydrogenase [NAD(P)+] activity"/>
    <property type="evidence" value="ECO:0007669"/>
    <property type="project" value="UniProtKB-UniRule"/>
</dbReference>
<dbReference type="GO" id="GO:0051287">
    <property type="term" value="F:NAD binding"/>
    <property type="evidence" value="ECO:0007669"/>
    <property type="project" value="InterPro"/>
</dbReference>
<dbReference type="GO" id="GO:0005975">
    <property type="term" value="P:carbohydrate metabolic process"/>
    <property type="evidence" value="ECO:0007669"/>
    <property type="project" value="InterPro"/>
</dbReference>
<dbReference type="GO" id="GO:0046167">
    <property type="term" value="P:glycerol-3-phosphate biosynthetic process"/>
    <property type="evidence" value="ECO:0007669"/>
    <property type="project" value="UniProtKB-UniRule"/>
</dbReference>
<dbReference type="GO" id="GO:0046168">
    <property type="term" value="P:glycerol-3-phosphate catabolic process"/>
    <property type="evidence" value="ECO:0007669"/>
    <property type="project" value="InterPro"/>
</dbReference>
<dbReference type="GO" id="GO:0006650">
    <property type="term" value="P:glycerophospholipid metabolic process"/>
    <property type="evidence" value="ECO:0007669"/>
    <property type="project" value="UniProtKB-UniRule"/>
</dbReference>
<dbReference type="GO" id="GO:0008654">
    <property type="term" value="P:phospholipid biosynthetic process"/>
    <property type="evidence" value="ECO:0007669"/>
    <property type="project" value="UniProtKB-KW"/>
</dbReference>
<dbReference type="FunFam" id="1.10.1040.10:FF:000001">
    <property type="entry name" value="Glycerol-3-phosphate dehydrogenase [NAD(P)+]"/>
    <property type="match status" value="1"/>
</dbReference>
<dbReference type="FunFam" id="3.40.50.720:FF:000019">
    <property type="entry name" value="Glycerol-3-phosphate dehydrogenase [NAD(P)+]"/>
    <property type="match status" value="1"/>
</dbReference>
<dbReference type="Gene3D" id="1.10.1040.10">
    <property type="entry name" value="N-(1-d-carboxylethyl)-l-norvaline Dehydrogenase, domain 2"/>
    <property type="match status" value="1"/>
</dbReference>
<dbReference type="Gene3D" id="3.40.50.720">
    <property type="entry name" value="NAD(P)-binding Rossmann-like Domain"/>
    <property type="match status" value="1"/>
</dbReference>
<dbReference type="HAMAP" id="MF_00394">
    <property type="entry name" value="NAD_Glyc3P_dehydrog"/>
    <property type="match status" value="1"/>
</dbReference>
<dbReference type="InterPro" id="IPR008927">
    <property type="entry name" value="6-PGluconate_DH-like_C_sf"/>
</dbReference>
<dbReference type="InterPro" id="IPR013328">
    <property type="entry name" value="6PGD_dom2"/>
</dbReference>
<dbReference type="InterPro" id="IPR006168">
    <property type="entry name" value="G3P_DH_NAD-dep"/>
</dbReference>
<dbReference type="InterPro" id="IPR006109">
    <property type="entry name" value="G3P_DH_NAD-dep_C"/>
</dbReference>
<dbReference type="InterPro" id="IPR011128">
    <property type="entry name" value="G3P_DH_NAD-dep_N"/>
</dbReference>
<dbReference type="InterPro" id="IPR036291">
    <property type="entry name" value="NAD(P)-bd_dom_sf"/>
</dbReference>
<dbReference type="NCBIfam" id="NF000940">
    <property type="entry name" value="PRK00094.1-2"/>
    <property type="match status" value="1"/>
</dbReference>
<dbReference type="NCBIfam" id="NF000941">
    <property type="entry name" value="PRK00094.1-3"/>
    <property type="match status" value="1"/>
</dbReference>
<dbReference type="NCBIfam" id="NF000942">
    <property type="entry name" value="PRK00094.1-4"/>
    <property type="match status" value="1"/>
</dbReference>
<dbReference type="PANTHER" id="PTHR11728">
    <property type="entry name" value="GLYCEROL-3-PHOSPHATE DEHYDROGENASE"/>
    <property type="match status" value="1"/>
</dbReference>
<dbReference type="PANTHER" id="PTHR11728:SF1">
    <property type="entry name" value="GLYCEROL-3-PHOSPHATE DEHYDROGENASE [NAD(+)] 2, CHLOROPLASTIC"/>
    <property type="match status" value="1"/>
</dbReference>
<dbReference type="Pfam" id="PF07479">
    <property type="entry name" value="NAD_Gly3P_dh_C"/>
    <property type="match status" value="1"/>
</dbReference>
<dbReference type="Pfam" id="PF01210">
    <property type="entry name" value="NAD_Gly3P_dh_N"/>
    <property type="match status" value="1"/>
</dbReference>
<dbReference type="PIRSF" id="PIRSF000114">
    <property type="entry name" value="Glycerol-3-P_dh"/>
    <property type="match status" value="1"/>
</dbReference>
<dbReference type="PRINTS" id="PR00077">
    <property type="entry name" value="GPDHDRGNASE"/>
</dbReference>
<dbReference type="SUPFAM" id="SSF48179">
    <property type="entry name" value="6-phosphogluconate dehydrogenase C-terminal domain-like"/>
    <property type="match status" value="1"/>
</dbReference>
<dbReference type="SUPFAM" id="SSF51735">
    <property type="entry name" value="NAD(P)-binding Rossmann-fold domains"/>
    <property type="match status" value="1"/>
</dbReference>
<dbReference type="PROSITE" id="PS00957">
    <property type="entry name" value="NAD_G3PDH"/>
    <property type="match status" value="1"/>
</dbReference>
<sequence>MKESIAVLGAGSWGTALAVLLAHKGFRVNLWARRPELATALRETGENKTYLPGVRLTGTIIPTADLPAAVKGAGLVVLSVPSHAVRSTARLLKPFLPKGTVVVNTAKGLELETKKRLSQVLVEEGLDRVAVLSGPSHAEEVGRGLPTTVVVAAADRETAEYVQDVFMDPTFRVYTNPDIIGVEFGGALKNIIALATGMADGLGLGDNTRAALMTRGMAEIARLGVALGGKVLTFAGLSGIGDLIVTCTSMYSRNRRAGILLGKGQSLEEVLDAVGMVVEGVRTTAAARELACQHGIKMPITEEIYQVLYKGKPVGDCVAALMERPRTHEVESGDW</sequence>
<feature type="chain" id="PRO_0000255332" description="Glycerol-3-phosphate dehydrogenase [NAD(P)+]">
    <location>
        <begin position="1"/>
        <end position="335"/>
    </location>
</feature>
<feature type="active site" description="Proton acceptor" evidence="1">
    <location>
        <position position="189"/>
    </location>
</feature>
<feature type="binding site" evidence="1">
    <location>
        <position position="12"/>
    </location>
    <ligand>
        <name>NADPH</name>
        <dbReference type="ChEBI" id="CHEBI:57783"/>
    </ligand>
</feature>
<feature type="binding site" evidence="1">
    <location>
        <position position="13"/>
    </location>
    <ligand>
        <name>NADPH</name>
        <dbReference type="ChEBI" id="CHEBI:57783"/>
    </ligand>
</feature>
<feature type="binding site" evidence="1">
    <location>
        <position position="33"/>
    </location>
    <ligand>
        <name>NADPH</name>
        <dbReference type="ChEBI" id="CHEBI:57783"/>
    </ligand>
</feature>
<feature type="binding site" evidence="1">
    <location>
        <position position="34"/>
    </location>
    <ligand>
        <name>NADPH</name>
        <dbReference type="ChEBI" id="CHEBI:57783"/>
    </ligand>
</feature>
<feature type="binding site" evidence="1">
    <location>
        <position position="107"/>
    </location>
    <ligand>
        <name>NADPH</name>
        <dbReference type="ChEBI" id="CHEBI:57783"/>
    </ligand>
</feature>
<feature type="binding site" evidence="1">
    <location>
        <position position="107"/>
    </location>
    <ligand>
        <name>sn-glycerol 3-phosphate</name>
        <dbReference type="ChEBI" id="CHEBI:57597"/>
    </ligand>
</feature>
<feature type="binding site" evidence="1">
    <location>
        <position position="134"/>
    </location>
    <ligand>
        <name>sn-glycerol 3-phosphate</name>
        <dbReference type="ChEBI" id="CHEBI:57597"/>
    </ligand>
</feature>
<feature type="binding site" evidence="1">
    <location>
        <position position="136"/>
    </location>
    <ligand>
        <name>sn-glycerol 3-phosphate</name>
        <dbReference type="ChEBI" id="CHEBI:57597"/>
    </ligand>
</feature>
<feature type="binding site" evidence="1">
    <location>
        <position position="138"/>
    </location>
    <ligand>
        <name>NADPH</name>
        <dbReference type="ChEBI" id="CHEBI:57783"/>
    </ligand>
</feature>
<feature type="binding site" evidence="1">
    <location>
        <position position="189"/>
    </location>
    <ligand>
        <name>sn-glycerol 3-phosphate</name>
        <dbReference type="ChEBI" id="CHEBI:57597"/>
    </ligand>
</feature>
<feature type="binding site" evidence="1">
    <location>
        <position position="242"/>
    </location>
    <ligand>
        <name>sn-glycerol 3-phosphate</name>
        <dbReference type="ChEBI" id="CHEBI:57597"/>
    </ligand>
</feature>
<feature type="binding site" evidence="1">
    <location>
        <position position="252"/>
    </location>
    <ligand>
        <name>sn-glycerol 3-phosphate</name>
        <dbReference type="ChEBI" id="CHEBI:57597"/>
    </ligand>
</feature>
<feature type="binding site" evidence="1">
    <location>
        <position position="253"/>
    </location>
    <ligand>
        <name>NADPH</name>
        <dbReference type="ChEBI" id="CHEBI:57783"/>
    </ligand>
</feature>
<feature type="binding site" evidence="1">
    <location>
        <position position="253"/>
    </location>
    <ligand>
        <name>sn-glycerol 3-phosphate</name>
        <dbReference type="ChEBI" id="CHEBI:57597"/>
    </ligand>
</feature>
<feature type="binding site" evidence="1">
    <location>
        <position position="254"/>
    </location>
    <ligand>
        <name>sn-glycerol 3-phosphate</name>
        <dbReference type="ChEBI" id="CHEBI:57597"/>
    </ligand>
</feature>
<feature type="binding site" evidence="1">
    <location>
        <position position="277"/>
    </location>
    <ligand>
        <name>NADPH</name>
        <dbReference type="ChEBI" id="CHEBI:57783"/>
    </ligand>
</feature>
<feature type="binding site" evidence="1">
    <location>
        <position position="279"/>
    </location>
    <ligand>
        <name>NADPH</name>
        <dbReference type="ChEBI" id="CHEBI:57783"/>
    </ligand>
</feature>
<evidence type="ECO:0000255" key="1">
    <source>
        <dbReference type="HAMAP-Rule" id="MF_00394"/>
    </source>
</evidence>